<dbReference type="EMBL" id="AE014134">
    <property type="protein sequence ID" value="AAF52176.1"/>
    <property type="molecule type" value="Genomic_DNA"/>
</dbReference>
<dbReference type="EMBL" id="AY095024">
    <property type="protein sequence ID" value="AAM11352.1"/>
    <property type="molecule type" value="mRNA"/>
</dbReference>
<dbReference type="RefSeq" id="NP_523476.1">
    <property type="nucleotide sequence ID" value="NM_078752.3"/>
</dbReference>
<dbReference type="SMR" id="Q9VMY1"/>
<dbReference type="BioGRID" id="59888">
    <property type="interactions" value="8"/>
</dbReference>
<dbReference type="FunCoup" id="Q9VMY1">
    <property type="interactions" value="676"/>
</dbReference>
<dbReference type="IntAct" id="Q9VMY1">
    <property type="interactions" value="5"/>
</dbReference>
<dbReference type="STRING" id="7227.FBpp0078694"/>
<dbReference type="PaxDb" id="7227-FBpp0078694"/>
<dbReference type="DNASU" id="33703"/>
<dbReference type="EnsemblMetazoa" id="FBtr0079058">
    <property type="protein sequence ID" value="FBpp0078694"/>
    <property type="gene ID" value="FBgn0031651"/>
</dbReference>
<dbReference type="GeneID" id="33703"/>
<dbReference type="KEGG" id="dme:Dmel_CG8849"/>
<dbReference type="AGR" id="FB:FBgn0031651"/>
<dbReference type="CTD" id="79590"/>
<dbReference type="FlyBase" id="FBgn0031651">
    <property type="gene designation" value="mRpL24"/>
</dbReference>
<dbReference type="VEuPathDB" id="VectorBase:FBgn0031651"/>
<dbReference type="eggNOG" id="KOG1708">
    <property type="taxonomic scope" value="Eukaryota"/>
</dbReference>
<dbReference type="GeneTree" id="ENSGT00390000014542"/>
<dbReference type="HOGENOM" id="CLU_093315_0_1_1"/>
<dbReference type="InParanoid" id="Q9VMY1"/>
<dbReference type="OMA" id="DFEWRFT"/>
<dbReference type="OrthoDB" id="359154at2759"/>
<dbReference type="PhylomeDB" id="Q9VMY1"/>
<dbReference type="Reactome" id="R-DME-5389840">
    <property type="pathway name" value="Mitochondrial translation elongation"/>
</dbReference>
<dbReference type="Reactome" id="R-DME-5419276">
    <property type="pathway name" value="Mitochondrial translation termination"/>
</dbReference>
<dbReference type="BioGRID-ORCS" id="33703">
    <property type="hits" value="0 hits in 1 CRISPR screen"/>
</dbReference>
<dbReference type="GenomeRNAi" id="33703"/>
<dbReference type="PRO" id="PR:Q9VMY1"/>
<dbReference type="Proteomes" id="UP000000803">
    <property type="component" value="Chromosome 2L"/>
</dbReference>
<dbReference type="Bgee" id="FBgn0031651">
    <property type="expression patterns" value="Expressed in oviduct (Drosophila) and 125 other cell types or tissues"/>
</dbReference>
<dbReference type="GO" id="GO:0005762">
    <property type="term" value="C:mitochondrial large ribosomal subunit"/>
    <property type="evidence" value="ECO:0000250"/>
    <property type="project" value="UniProtKB"/>
</dbReference>
<dbReference type="GO" id="GO:0005739">
    <property type="term" value="C:mitochondrion"/>
    <property type="evidence" value="ECO:0000318"/>
    <property type="project" value="GO_Central"/>
</dbReference>
<dbReference type="GO" id="GO:0003723">
    <property type="term" value="F:RNA binding"/>
    <property type="evidence" value="ECO:0007669"/>
    <property type="project" value="InterPro"/>
</dbReference>
<dbReference type="GO" id="GO:0003735">
    <property type="term" value="F:structural constituent of ribosome"/>
    <property type="evidence" value="ECO:0000304"/>
    <property type="project" value="FlyBase"/>
</dbReference>
<dbReference type="GO" id="GO:0032543">
    <property type="term" value="P:mitochondrial translation"/>
    <property type="evidence" value="ECO:0000304"/>
    <property type="project" value="FlyBase"/>
</dbReference>
<dbReference type="GO" id="GO:0006412">
    <property type="term" value="P:translation"/>
    <property type="evidence" value="ECO:0000318"/>
    <property type="project" value="GO_Central"/>
</dbReference>
<dbReference type="CDD" id="cd06089">
    <property type="entry name" value="KOW_RPL26"/>
    <property type="match status" value="1"/>
</dbReference>
<dbReference type="FunFam" id="2.30.30.30:FF:000032">
    <property type="entry name" value="39S ribosomal protein L24, mitochondrial"/>
    <property type="match status" value="1"/>
</dbReference>
<dbReference type="Gene3D" id="2.30.30.30">
    <property type="match status" value="1"/>
</dbReference>
<dbReference type="HAMAP" id="MF_01326_B">
    <property type="entry name" value="Ribosomal_uL24_B"/>
    <property type="match status" value="1"/>
</dbReference>
<dbReference type="InterPro" id="IPR005824">
    <property type="entry name" value="KOW"/>
</dbReference>
<dbReference type="InterPro" id="IPR014722">
    <property type="entry name" value="Rib_uL2_dom2"/>
</dbReference>
<dbReference type="InterPro" id="IPR003256">
    <property type="entry name" value="Ribosomal_uL24"/>
</dbReference>
<dbReference type="InterPro" id="IPR005825">
    <property type="entry name" value="Ribosomal_uL24_CS"/>
</dbReference>
<dbReference type="InterPro" id="IPR041988">
    <property type="entry name" value="Ribosomal_uL24_KOW"/>
</dbReference>
<dbReference type="InterPro" id="IPR008991">
    <property type="entry name" value="Translation_prot_SH3-like_sf"/>
</dbReference>
<dbReference type="NCBIfam" id="TIGR01079">
    <property type="entry name" value="rplX_bact"/>
    <property type="match status" value="1"/>
</dbReference>
<dbReference type="PANTHER" id="PTHR12903">
    <property type="entry name" value="MITOCHONDRIAL RIBOSOMAL PROTEIN L24"/>
    <property type="match status" value="1"/>
</dbReference>
<dbReference type="Pfam" id="PF00467">
    <property type="entry name" value="KOW"/>
    <property type="match status" value="1"/>
</dbReference>
<dbReference type="Pfam" id="PF17136">
    <property type="entry name" value="ribosomal_L24"/>
    <property type="match status" value="1"/>
</dbReference>
<dbReference type="SMART" id="SM00739">
    <property type="entry name" value="KOW"/>
    <property type="match status" value="1"/>
</dbReference>
<dbReference type="SUPFAM" id="SSF50104">
    <property type="entry name" value="Translation proteins SH3-like domain"/>
    <property type="match status" value="1"/>
</dbReference>
<dbReference type="PROSITE" id="PS01108">
    <property type="entry name" value="RIBOSOMAL_L24"/>
    <property type="match status" value="1"/>
</dbReference>
<evidence type="ECO:0000250" key="1">
    <source>
        <dbReference type="UniProtKB" id="Q96A35"/>
    </source>
</evidence>
<evidence type="ECO:0000255" key="2"/>
<evidence type="ECO:0000305" key="3"/>
<reference key="1">
    <citation type="journal article" date="2000" name="Science">
        <title>The genome sequence of Drosophila melanogaster.</title>
        <authorList>
            <person name="Adams M.D."/>
            <person name="Celniker S.E."/>
            <person name="Holt R.A."/>
            <person name="Evans C.A."/>
            <person name="Gocayne J.D."/>
            <person name="Amanatides P.G."/>
            <person name="Scherer S.E."/>
            <person name="Li P.W."/>
            <person name="Hoskins R.A."/>
            <person name="Galle R.F."/>
            <person name="George R.A."/>
            <person name="Lewis S.E."/>
            <person name="Richards S."/>
            <person name="Ashburner M."/>
            <person name="Henderson S.N."/>
            <person name="Sutton G.G."/>
            <person name="Wortman J.R."/>
            <person name="Yandell M.D."/>
            <person name="Zhang Q."/>
            <person name="Chen L.X."/>
            <person name="Brandon R.C."/>
            <person name="Rogers Y.-H.C."/>
            <person name="Blazej R.G."/>
            <person name="Champe M."/>
            <person name="Pfeiffer B.D."/>
            <person name="Wan K.H."/>
            <person name="Doyle C."/>
            <person name="Baxter E.G."/>
            <person name="Helt G."/>
            <person name="Nelson C.R."/>
            <person name="Miklos G.L.G."/>
            <person name="Abril J.F."/>
            <person name="Agbayani A."/>
            <person name="An H.-J."/>
            <person name="Andrews-Pfannkoch C."/>
            <person name="Baldwin D."/>
            <person name="Ballew R.M."/>
            <person name="Basu A."/>
            <person name="Baxendale J."/>
            <person name="Bayraktaroglu L."/>
            <person name="Beasley E.M."/>
            <person name="Beeson K.Y."/>
            <person name="Benos P.V."/>
            <person name="Berman B.P."/>
            <person name="Bhandari D."/>
            <person name="Bolshakov S."/>
            <person name="Borkova D."/>
            <person name="Botchan M.R."/>
            <person name="Bouck J."/>
            <person name="Brokstein P."/>
            <person name="Brottier P."/>
            <person name="Burtis K.C."/>
            <person name="Busam D.A."/>
            <person name="Butler H."/>
            <person name="Cadieu E."/>
            <person name="Center A."/>
            <person name="Chandra I."/>
            <person name="Cherry J.M."/>
            <person name="Cawley S."/>
            <person name="Dahlke C."/>
            <person name="Davenport L.B."/>
            <person name="Davies P."/>
            <person name="de Pablos B."/>
            <person name="Delcher A."/>
            <person name="Deng Z."/>
            <person name="Mays A.D."/>
            <person name="Dew I."/>
            <person name="Dietz S.M."/>
            <person name="Dodson K."/>
            <person name="Doup L.E."/>
            <person name="Downes M."/>
            <person name="Dugan-Rocha S."/>
            <person name="Dunkov B.C."/>
            <person name="Dunn P."/>
            <person name="Durbin K.J."/>
            <person name="Evangelista C.C."/>
            <person name="Ferraz C."/>
            <person name="Ferriera S."/>
            <person name="Fleischmann W."/>
            <person name="Fosler C."/>
            <person name="Gabrielian A.E."/>
            <person name="Garg N.S."/>
            <person name="Gelbart W.M."/>
            <person name="Glasser K."/>
            <person name="Glodek A."/>
            <person name="Gong F."/>
            <person name="Gorrell J.H."/>
            <person name="Gu Z."/>
            <person name="Guan P."/>
            <person name="Harris M."/>
            <person name="Harris N.L."/>
            <person name="Harvey D.A."/>
            <person name="Heiman T.J."/>
            <person name="Hernandez J.R."/>
            <person name="Houck J."/>
            <person name="Hostin D."/>
            <person name="Houston K.A."/>
            <person name="Howland T.J."/>
            <person name="Wei M.-H."/>
            <person name="Ibegwam C."/>
            <person name="Jalali M."/>
            <person name="Kalush F."/>
            <person name="Karpen G.H."/>
            <person name="Ke Z."/>
            <person name="Kennison J.A."/>
            <person name="Ketchum K.A."/>
            <person name="Kimmel B.E."/>
            <person name="Kodira C.D."/>
            <person name="Kraft C.L."/>
            <person name="Kravitz S."/>
            <person name="Kulp D."/>
            <person name="Lai Z."/>
            <person name="Lasko P."/>
            <person name="Lei Y."/>
            <person name="Levitsky A.A."/>
            <person name="Li J.H."/>
            <person name="Li Z."/>
            <person name="Liang Y."/>
            <person name="Lin X."/>
            <person name="Liu X."/>
            <person name="Mattei B."/>
            <person name="McIntosh T.C."/>
            <person name="McLeod M.P."/>
            <person name="McPherson D."/>
            <person name="Merkulov G."/>
            <person name="Milshina N.V."/>
            <person name="Mobarry C."/>
            <person name="Morris J."/>
            <person name="Moshrefi A."/>
            <person name="Mount S.M."/>
            <person name="Moy M."/>
            <person name="Murphy B."/>
            <person name="Murphy L."/>
            <person name="Muzny D.M."/>
            <person name="Nelson D.L."/>
            <person name="Nelson D.R."/>
            <person name="Nelson K.A."/>
            <person name="Nixon K."/>
            <person name="Nusskern D.R."/>
            <person name="Pacleb J.M."/>
            <person name="Palazzolo M."/>
            <person name="Pittman G.S."/>
            <person name="Pan S."/>
            <person name="Pollard J."/>
            <person name="Puri V."/>
            <person name="Reese M.G."/>
            <person name="Reinert K."/>
            <person name="Remington K."/>
            <person name="Saunders R.D.C."/>
            <person name="Scheeler F."/>
            <person name="Shen H."/>
            <person name="Shue B.C."/>
            <person name="Siden-Kiamos I."/>
            <person name="Simpson M."/>
            <person name="Skupski M.P."/>
            <person name="Smith T.J."/>
            <person name="Spier E."/>
            <person name="Spradling A.C."/>
            <person name="Stapleton M."/>
            <person name="Strong R."/>
            <person name="Sun E."/>
            <person name="Svirskas R."/>
            <person name="Tector C."/>
            <person name="Turner R."/>
            <person name="Venter E."/>
            <person name="Wang A.H."/>
            <person name="Wang X."/>
            <person name="Wang Z.-Y."/>
            <person name="Wassarman D.A."/>
            <person name="Weinstock G.M."/>
            <person name="Weissenbach J."/>
            <person name="Williams S.M."/>
            <person name="Woodage T."/>
            <person name="Worley K.C."/>
            <person name="Wu D."/>
            <person name="Yang S."/>
            <person name="Yao Q.A."/>
            <person name="Ye J."/>
            <person name="Yeh R.-F."/>
            <person name="Zaveri J.S."/>
            <person name="Zhan M."/>
            <person name="Zhang G."/>
            <person name="Zhao Q."/>
            <person name="Zheng L."/>
            <person name="Zheng X.H."/>
            <person name="Zhong F.N."/>
            <person name="Zhong W."/>
            <person name="Zhou X."/>
            <person name="Zhu S.C."/>
            <person name="Zhu X."/>
            <person name="Smith H.O."/>
            <person name="Gibbs R.A."/>
            <person name="Myers E.W."/>
            <person name="Rubin G.M."/>
            <person name="Venter J.C."/>
        </authorList>
    </citation>
    <scope>NUCLEOTIDE SEQUENCE [LARGE SCALE GENOMIC DNA]</scope>
    <source>
        <strain>Berkeley</strain>
    </source>
</reference>
<reference key="2">
    <citation type="journal article" date="2002" name="Genome Biol.">
        <title>Annotation of the Drosophila melanogaster euchromatic genome: a systematic review.</title>
        <authorList>
            <person name="Misra S."/>
            <person name="Crosby M.A."/>
            <person name="Mungall C.J."/>
            <person name="Matthews B.B."/>
            <person name="Campbell K.S."/>
            <person name="Hradecky P."/>
            <person name="Huang Y."/>
            <person name="Kaminker J.S."/>
            <person name="Millburn G.H."/>
            <person name="Prochnik S.E."/>
            <person name="Smith C.D."/>
            <person name="Tupy J.L."/>
            <person name="Whitfield E.J."/>
            <person name="Bayraktaroglu L."/>
            <person name="Berman B.P."/>
            <person name="Bettencourt B.R."/>
            <person name="Celniker S.E."/>
            <person name="de Grey A.D.N.J."/>
            <person name="Drysdale R.A."/>
            <person name="Harris N.L."/>
            <person name="Richter J."/>
            <person name="Russo S."/>
            <person name="Schroeder A.J."/>
            <person name="Shu S.Q."/>
            <person name="Stapleton M."/>
            <person name="Yamada C."/>
            <person name="Ashburner M."/>
            <person name="Gelbart W.M."/>
            <person name="Rubin G.M."/>
            <person name="Lewis S.E."/>
        </authorList>
    </citation>
    <scope>GENOME REANNOTATION</scope>
    <source>
        <strain>Berkeley</strain>
    </source>
</reference>
<reference key="3">
    <citation type="journal article" date="2002" name="Genome Biol.">
        <title>A Drosophila full-length cDNA resource.</title>
        <authorList>
            <person name="Stapleton M."/>
            <person name="Carlson J.W."/>
            <person name="Brokstein P."/>
            <person name="Yu C."/>
            <person name="Champe M."/>
            <person name="George R.A."/>
            <person name="Guarin H."/>
            <person name="Kronmiller B."/>
            <person name="Pacleb J.M."/>
            <person name="Park S."/>
            <person name="Wan K.H."/>
            <person name="Rubin G.M."/>
            <person name="Celniker S.E."/>
        </authorList>
    </citation>
    <scope>NUCLEOTIDE SEQUENCE [LARGE SCALE MRNA]</scope>
    <source>
        <strain>Berkeley</strain>
        <tissue>Embryo</tissue>
    </source>
</reference>
<protein>
    <recommendedName>
        <fullName evidence="3">Large ribosomal subunit protein uL24m</fullName>
    </recommendedName>
    <alternativeName>
        <fullName evidence="3">39S ribosomal protein L24, mitochondrial</fullName>
        <shortName>L24mt</shortName>
        <shortName>MRP-L24</shortName>
    </alternativeName>
</protein>
<keyword id="KW-0496">Mitochondrion</keyword>
<keyword id="KW-1185">Reference proteome</keyword>
<keyword id="KW-0687">Ribonucleoprotein</keyword>
<keyword id="KW-0689">Ribosomal protein</keyword>
<keyword id="KW-0809">Transit peptide</keyword>
<sequence>MRLTQYLASKLKNFSNLPKEYIERSKKQVYWQTPKEINYLPRTVERKRFRYTTNRSWTGQFRQQNMPGTVRRKVLVEPIEDWSFFRGDRIEVLVGKDKGKQGIVTQVIPERNWVIVEGLNWHYRKVGGEKEFPGIIIKSEAPLHVTKDIRLVDPSDLQGTDFEWRFTEEGEKVRVSLRSGRIIPIPETNNQTHDYKTPNAYIEREKDTPGAVVGEITFQPKLSTFEMDIMEEMGIKEERTPVKSYWY</sequence>
<organism>
    <name type="scientific">Drosophila melanogaster</name>
    <name type="common">Fruit fly</name>
    <dbReference type="NCBI Taxonomy" id="7227"/>
    <lineage>
        <taxon>Eukaryota</taxon>
        <taxon>Metazoa</taxon>
        <taxon>Ecdysozoa</taxon>
        <taxon>Arthropoda</taxon>
        <taxon>Hexapoda</taxon>
        <taxon>Insecta</taxon>
        <taxon>Pterygota</taxon>
        <taxon>Neoptera</taxon>
        <taxon>Endopterygota</taxon>
        <taxon>Diptera</taxon>
        <taxon>Brachycera</taxon>
        <taxon>Muscomorpha</taxon>
        <taxon>Ephydroidea</taxon>
        <taxon>Drosophilidae</taxon>
        <taxon>Drosophila</taxon>
        <taxon>Sophophora</taxon>
    </lineage>
</organism>
<accession>Q9VMY1</accession>
<feature type="transit peptide" description="Mitochondrion" evidence="2">
    <location>
        <begin position="1"/>
        <end status="unknown"/>
    </location>
</feature>
<feature type="chain" id="PRO_0000270495" description="Large ribosomal subunit protein uL24m">
    <location>
        <begin status="unknown"/>
        <end position="247"/>
    </location>
</feature>
<feature type="domain" description="KOW">
    <location>
        <begin position="84"/>
        <end position="117"/>
    </location>
</feature>
<gene>
    <name type="primary">mRpL24</name>
    <name type="ORF">CG8849</name>
</gene>
<proteinExistence type="evidence at transcript level"/>
<name>RM24_DROME</name>
<comment type="subunit">
    <text evidence="1">Component of the mitochondrial ribosome large subunit (39S) which comprises a 16S rRNA and about 50 distinct proteins.</text>
</comment>
<comment type="subcellular location">
    <subcellularLocation>
        <location evidence="1">Mitochondrion</location>
    </subcellularLocation>
</comment>
<comment type="similarity">
    <text evidence="3">Belongs to the universal ribosomal protein uL24 family.</text>
</comment>